<organism>
    <name type="scientific">Aeromonas salmonicida (strain A449)</name>
    <dbReference type="NCBI Taxonomy" id="382245"/>
    <lineage>
        <taxon>Bacteria</taxon>
        <taxon>Pseudomonadati</taxon>
        <taxon>Pseudomonadota</taxon>
        <taxon>Gammaproteobacteria</taxon>
        <taxon>Aeromonadales</taxon>
        <taxon>Aeromonadaceae</taxon>
        <taxon>Aeromonas</taxon>
    </lineage>
</organism>
<accession>A4SHU2</accession>
<name>EFTU_AERS4</name>
<protein>
    <recommendedName>
        <fullName evidence="2">Elongation factor Tu</fullName>
        <shortName evidence="2">EF-Tu</shortName>
        <ecNumber evidence="2">3.6.5.3</ecNumber>
    </recommendedName>
</protein>
<dbReference type="EC" id="3.6.5.3" evidence="2"/>
<dbReference type="EMBL" id="CP000644">
    <property type="protein sequence ID" value="ABO88464.1"/>
    <property type="molecule type" value="Genomic_DNA"/>
</dbReference>
<dbReference type="EMBL" id="CP000644">
    <property type="protein sequence ID" value="ABO88481.1"/>
    <property type="molecule type" value="Genomic_DNA"/>
</dbReference>
<dbReference type="SMR" id="A4SHU2"/>
<dbReference type="STRING" id="29491.GCA_000820065_01427"/>
<dbReference type="KEGG" id="asa:ASA_0275"/>
<dbReference type="KEGG" id="asa:ASA_0293"/>
<dbReference type="eggNOG" id="COG0050">
    <property type="taxonomic scope" value="Bacteria"/>
</dbReference>
<dbReference type="HOGENOM" id="CLU_007265_0_2_6"/>
<dbReference type="Proteomes" id="UP000000225">
    <property type="component" value="Chromosome"/>
</dbReference>
<dbReference type="GO" id="GO:0005829">
    <property type="term" value="C:cytosol"/>
    <property type="evidence" value="ECO:0007669"/>
    <property type="project" value="TreeGrafter"/>
</dbReference>
<dbReference type="GO" id="GO:0005525">
    <property type="term" value="F:GTP binding"/>
    <property type="evidence" value="ECO:0007669"/>
    <property type="project" value="UniProtKB-UniRule"/>
</dbReference>
<dbReference type="GO" id="GO:0003924">
    <property type="term" value="F:GTPase activity"/>
    <property type="evidence" value="ECO:0007669"/>
    <property type="project" value="InterPro"/>
</dbReference>
<dbReference type="GO" id="GO:0097216">
    <property type="term" value="F:guanosine tetraphosphate binding"/>
    <property type="evidence" value="ECO:0007669"/>
    <property type="project" value="UniProtKB-ARBA"/>
</dbReference>
<dbReference type="GO" id="GO:0003746">
    <property type="term" value="F:translation elongation factor activity"/>
    <property type="evidence" value="ECO:0007669"/>
    <property type="project" value="UniProtKB-UniRule"/>
</dbReference>
<dbReference type="CDD" id="cd01884">
    <property type="entry name" value="EF_Tu"/>
    <property type="match status" value="1"/>
</dbReference>
<dbReference type="CDD" id="cd03697">
    <property type="entry name" value="EFTU_II"/>
    <property type="match status" value="1"/>
</dbReference>
<dbReference type="CDD" id="cd03707">
    <property type="entry name" value="EFTU_III"/>
    <property type="match status" value="1"/>
</dbReference>
<dbReference type="FunFam" id="2.40.30.10:FF:000001">
    <property type="entry name" value="Elongation factor Tu"/>
    <property type="match status" value="1"/>
</dbReference>
<dbReference type="FunFam" id="3.40.50.300:FF:000003">
    <property type="entry name" value="Elongation factor Tu"/>
    <property type="match status" value="1"/>
</dbReference>
<dbReference type="Gene3D" id="3.40.50.300">
    <property type="entry name" value="P-loop containing nucleotide triphosphate hydrolases"/>
    <property type="match status" value="1"/>
</dbReference>
<dbReference type="Gene3D" id="2.40.30.10">
    <property type="entry name" value="Translation factors"/>
    <property type="match status" value="2"/>
</dbReference>
<dbReference type="HAMAP" id="MF_00118_B">
    <property type="entry name" value="EF_Tu_B"/>
    <property type="match status" value="1"/>
</dbReference>
<dbReference type="InterPro" id="IPR041709">
    <property type="entry name" value="EF-Tu_GTP-bd"/>
</dbReference>
<dbReference type="InterPro" id="IPR050055">
    <property type="entry name" value="EF-Tu_GTPase"/>
</dbReference>
<dbReference type="InterPro" id="IPR004161">
    <property type="entry name" value="EFTu-like_2"/>
</dbReference>
<dbReference type="InterPro" id="IPR033720">
    <property type="entry name" value="EFTU_2"/>
</dbReference>
<dbReference type="InterPro" id="IPR031157">
    <property type="entry name" value="G_TR_CS"/>
</dbReference>
<dbReference type="InterPro" id="IPR027417">
    <property type="entry name" value="P-loop_NTPase"/>
</dbReference>
<dbReference type="InterPro" id="IPR005225">
    <property type="entry name" value="Small_GTP-bd"/>
</dbReference>
<dbReference type="InterPro" id="IPR000795">
    <property type="entry name" value="T_Tr_GTP-bd_dom"/>
</dbReference>
<dbReference type="InterPro" id="IPR009000">
    <property type="entry name" value="Transl_B-barrel_sf"/>
</dbReference>
<dbReference type="InterPro" id="IPR009001">
    <property type="entry name" value="Transl_elong_EF1A/Init_IF2_C"/>
</dbReference>
<dbReference type="InterPro" id="IPR004541">
    <property type="entry name" value="Transl_elong_EFTu/EF1A_bac/org"/>
</dbReference>
<dbReference type="InterPro" id="IPR004160">
    <property type="entry name" value="Transl_elong_EFTu/EF1A_C"/>
</dbReference>
<dbReference type="NCBIfam" id="TIGR00485">
    <property type="entry name" value="EF-Tu"/>
    <property type="match status" value="1"/>
</dbReference>
<dbReference type="NCBIfam" id="NF000766">
    <property type="entry name" value="PRK00049.1"/>
    <property type="match status" value="1"/>
</dbReference>
<dbReference type="NCBIfam" id="NF009372">
    <property type="entry name" value="PRK12735.1"/>
    <property type="match status" value="1"/>
</dbReference>
<dbReference type="NCBIfam" id="NF009373">
    <property type="entry name" value="PRK12736.1"/>
    <property type="match status" value="1"/>
</dbReference>
<dbReference type="NCBIfam" id="TIGR00231">
    <property type="entry name" value="small_GTP"/>
    <property type="match status" value="1"/>
</dbReference>
<dbReference type="PANTHER" id="PTHR43721:SF22">
    <property type="entry name" value="ELONGATION FACTOR TU, MITOCHONDRIAL"/>
    <property type="match status" value="1"/>
</dbReference>
<dbReference type="PANTHER" id="PTHR43721">
    <property type="entry name" value="ELONGATION FACTOR TU-RELATED"/>
    <property type="match status" value="1"/>
</dbReference>
<dbReference type="Pfam" id="PF00009">
    <property type="entry name" value="GTP_EFTU"/>
    <property type="match status" value="1"/>
</dbReference>
<dbReference type="Pfam" id="PF03144">
    <property type="entry name" value="GTP_EFTU_D2"/>
    <property type="match status" value="1"/>
</dbReference>
<dbReference type="Pfam" id="PF03143">
    <property type="entry name" value="GTP_EFTU_D3"/>
    <property type="match status" value="1"/>
</dbReference>
<dbReference type="PRINTS" id="PR00315">
    <property type="entry name" value="ELONGATNFCT"/>
</dbReference>
<dbReference type="SUPFAM" id="SSF50465">
    <property type="entry name" value="EF-Tu/eEF-1alpha/eIF2-gamma C-terminal domain"/>
    <property type="match status" value="1"/>
</dbReference>
<dbReference type="SUPFAM" id="SSF52540">
    <property type="entry name" value="P-loop containing nucleoside triphosphate hydrolases"/>
    <property type="match status" value="1"/>
</dbReference>
<dbReference type="SUPFAM" id="SSF50447">
    <property type="entry name" value="Translation proteins"/>
    <property type="match status" value="1"/>
</dbReference>
<dbReference type="PROSITE" id="PS00301">
    <property type="entry name" value="G_TR_1"/>
    <property type="match status" value="1"/>
</dbReference>
<dbReference type="PROSITE" id="PS51722">
    <property type="entry name" value="G_TR_2"/>
    <property type="match status" value="1"/>
</dbReference>
<keyword id="KW-0963">Cytoplasm</keyword>
<keyword id="KW-0251">Elongation factor</keyword>
<keyword id="KW-0342">GTP-binding</keyword>
<keyword id="KW-0378">Hydrolase</keyword>
<keyword id="KW-0460">Magnesium</keyword>
<keyword id="KW-0479">Metal-binding</keyword>
<keyword id="KW-0547">Nucleotide-binding</keyword>
<keyword id="KW-0648">Protein biosynthesis</keyword>
<comment type="function">
    <text evidence="2">GTP hydrolase that promotes the GTP-dependent binding of aminoacyl-tRNA to the A-site of ribosomes during protein biosynthesis.</text>
</comment>
<comment type="catalytic activity">
    <reaction evidence="2">
        <text>GTP + H2O = GDP + phosphate + H(+)</text>
        <dbReference type="Rhea" id="RHEA:19669"/>
        <dbReference type="ChEBI" id="CHEBI:15377"/>
        <dbReference type="ChEBI" id="CHEBI:15378"/>
        <dbReference type="ChEBI" id="CHEBI:37565"/>
        <dbReference type="ChEBI" id="CHEBI:43474"/>
        <dbReference type="ChEBI" id="CHEBI:58189"/>
        <dbReference type="EC" id="3.6.5.3"/>
    </reaction>
    <physiologicalReaction direction="left-to-right" evidence="2">
        <dbReference type="Rhea" id="RHEA:19670"/>
    </physiologicalReaction>
</comment>
<comment type="subunit">
    <text evidence="2">Monomer.</text>
</comment>
<comment type="subcellular location">
    <subcellularLocation>
        <location evidence="2">Cytoplasm</location>
    </subcellularLocation>
</comment>
<comment type="similarity">
    <text evidence="2">Belongs to the TRAFAC class translation factor GTPase superfamily. Classic translation factor GTPase family. EF-Tu/EF-1A subfamily.</text>
</comment>
<proteinExistence type="inferred from homology"/>
<reference key="1">
    <citation type="journal article" date="2008" name="BMC Genomics">
        <title>The genome of Aeromonas salmonicida subsp. salmonicida A449: insights into the evolution of a fish pathogen.</title>
        <authorList>
            <person name="Reith M.E."/>
            <person name="Singh R.K."/>
            <person name="Curtis B."/>
            <person name="Boyd J.M."/>
            <person name="Bouevitch A."/>
            <person name="Kimball J."/>
            <person name="Munholland J."/>
            <person name="Murphy C."/>
            <person name="Sarty D."/>
            <person name="Williams J."/>
            <person name="Nash J.H."/>
            <person name="Johnson S.C."/>
            <person name="Brown L.L."/>
        </authorList>
    </citation>
    <scope>NUCLEOTIDE SEQUENCE [LARGE SCALE GENOMIC DNA]</scope>
    <source>
        <strain>A449</strain>
    </source>
</reference>
<evidence type="ECO:0000250" key="1"/>
<evidence type="ECO:0000255" key="2">
    <source>
        <dbReference type="HAMAP-Rule" id="MF_00118"/>
    </source>
</evidence>
<sequence length="394" mass="43300">MSKEKFERNKPHVNVGTIGHVDHGKTTLTAAITNVLAKHFGGKAFAFDQIDKAPEERERGITINTSHVEYDTAIRHYAHVDCPGHADYVKNMITGAAQMDGAILVVAATDGPMPQTREHILLGRQVGIPYMIVFMNKCDMVDDEELLELVEMEVRELLTEYDFPGDDLPVVRGSALKALEGDAAWEEKIIELANHLDTYIPEPERAIDLPFLMPIEDVFSIAGRGTVVTGRVERGIVKVGETVEIVGIKDTVSTTCTGVEMFRKLLDEGRAGENIGALLRGVKREDVERGQVLAKPGSIKPHTKFESEVYVLSKEEGGRHTPFFKGYRPQFYFRTTDVTGTIELPEGVEMVMPGDNIKMVVTLIAPIAMDDGLRFAIREGGRTVGAGVVASVIA</sequence>
<gene>
    <name evidence="2" type="primary">tuf1</name>
    <name type="synonym">tufB</name>
    <name type="ordered locus">ASA_0275</name>
</gene>
<gene>
    <name evidence="2" type="primary">tuf2</name>
    <name type="synonym">tufA</name>
    <name type="ordered locus">ASA_0293</name>
</gene>
<feature type="chain" id="PRO_0000337307" description="Elongation factor Tu">
    <location>
        <begin position="1"/>
        <end position="394"/>
    </location>
</feature>
<feature type="domain" description="tr-type G">
    <location>
        <begin position="10"/>
        <end position="204"/>
    </location>
</feature>
<feature type="region of interest" description="G1" evidence="1">
    <location>
        <begin position="19"/>
        <end position="26"/>
    </location>
</feature>
<feature type="region of interest" description="G2" evidence="1">
    <location>
        <begin position="60"/>
        <end position="64"/>
    </location>
</feature>
<feature type="region of interest" description="G3" evidence="1">
    <location>
        <begin position="81"/>
        <end position="84"/>
    </location>
</feature>
<feature type="region of interest" description="G4" evidence="1">
    <location>
        <begin position="136"/>
        <end position="139"/>
    </location>
</feature>
<feature type="region of interest" description="G5" evidence="1">
    <location>
        <begin position="174"/>
        <end position="176"/>
    </location>
</feature>
<feature type="binding site" evidence="2">
    <location>
        <begin position="19"/>
        <end position="26"/>
    </location>
    <ligand>
        <name>GTP</name>
        <dbReference type="ChEBI" id="CHEBI:37565"/>
    </ligand>
</feature>
<feature type="binding site" evidence="2">
    <location>
        <position position="26"/>
    </location>
    <ligand>
        <name>Mg(2+)</name>
        <dbReference type="ChEBI" id="CHEBI:18420"/>
    </ligand>
</feature>
<feature type="binding site" evidence="2">
    <location>
        <begin position="81"/>
        <end position="85"/>
    </location>
    <ligand>
        <name>GTP</name>
        <dbReference type="ChEBI" id="CHEBI:37565"/>
    </ligand>
</feature>
<feature type="binding site" evidence="2">
    <location>
        <begin position="136"/>
        <end position="139"/>
    </location>
    <ligand>
        <name>GTP</name>
        <dbReference type="ChEBI" id="CHEBI:37565"/>
    </ligand>
</feature>